<evidence type="ECO:0000250" key="1"/>
<evidence type="ECO:0000305" key="2"/>
<protein>
    <recommendedName>
        <fullName>Inositol-pentakisphosphate 2-kinase</fullName>
        <ecNumber>2.7.1.158</ecNumber>
    </recommendedName>
    <alternativeName>
        <fullName>Inositol-1,3,4,5,6-pentakisphosphate 2-kinase</fullName>
    </alternativeName>
    <alternativeName>
        <fullName>Ins(1,3,4,5,6)P5 2-kinase</fullName>
        <shortName>InsP5 2-kinase</shortName>
    </alternativeName>
</protein>
<dbReference type="EC" id="2.7.1.158"/>
<dbReference type="EMBL" id="AE016814">
    <property type="protein sequence ID" value="AAS50329.1"/>
    <property type="molecule type" value="Genomic_DNA"/>
</dbReference>
<dbReference type="RefSeq" id="NP_982505.1">
    <property type="nucleotide sequence ID" value="NM_207858.1"/>
</dbReference>
<dbReference type="SMR" id="Q75EW5"/>
<dbReference type="FunCoup" id="Q75EW5">
    <property type="interactions" value="42"/>
</dbReference>
<dbReference type="STRING" id="284811.Q75EW5"/>
<dbReference type="EnsemblFungi" id="AAS50329">
    <property type="protein sequence ID" value="AAS50329"/>
    <property type="gene ID" value="AGOS_AAL037C"/>
</dbReference>
<dbReference type="GeneID" id="4618627"/>
<dbReference type="KEGG" id="ago:AGOS_AAL037C"/>
<dbReference type="eggNOG" id="ENOG502S05I">
    <property type="taxonomic scope" value="Eukaryota"/>
</dbReference>
<dbReference type="HOGENOM" id="CLU_046294_0_0_1"/>
<dbReference type="InParanoid" id="Q75EW5"/>
<dbReference type="OMA" id="FIELRCK"/>
<dbReference type="OrthoDB" id="272370at2759"/>
<dbReference type="Proteomes" id="UP000000591">
    <property type="component" value="Chromosome I"/>
</dbReference>
<dbReference type="GO" id="GO:0005634">
    <property type="term" value="C:nucleus"/>
    <property type="evidence" value="ECO:0000318"/>
    <property type="project" value="GO_Central"/>
</dbReference>
<dbReference type="GO" id="GO:0005524">
    <property type="term" value="F:ATP binding"/>
    <property type="evidence" value="ECO:0007669"/>
    <property type="project" value="UniProtKB-KW"/>
</dbReference>
<dbReference type="GO" id="GO:0035299">
    <property type="term" value="F:inositol-1,3,4,5,6-pentakisphosphate 2-kinase activity"/>
    <property type="evidence" value="ECO:0000318"/>
    <property type="project" value="GO_Central"/>
</dbReference>
<dbReference type="GO" id="GO:0032958">
    <property type="term" value="P:inositol phosphate biosynthetic process"/>
    <property type="evidence" value="ECO:0000318"/>
    <property type="project" value="GO_Central"/>
</dbReference>
<dbReference type="InterPro" id="IPR009286">
    <property type="entry name" value="Ins_P5_2-kin"/>
</dbReference>
<dbReference type="PANTHER" id="PTHR14456">
    <property type="entry name" value="INOSITOL POLYPHOSPHATE KINASE 1"/>
    <property type="match status" value="1"/>
</dbReference>
<dbReference type="PANTHER" id="PTHR14456:SF2">
    <property type="entry name" value="INOSITOL-PENTAKISPHOSPHATE 2-KINASE"/>
    <property type="match status" value="1"/>
</dbReference>
<dbReference type="Pfam" id="PF06090">
    <property type="entry name" value="Ins_P5_2-kin"/>
    <property type="match status" value="2"/>
</dbReference>
<proteinExistence type="inferred from homology"/>
<name>IPK1_EREGS</name>
<sequence length="278" mass="31047">MVKIIGKGGANYVLAFGNDNDDLYRICVRGRSLRENNRSTVDNYHYALEVVKPQLGEFVCRMELVDLPVCDSLRQVLKSKIEVWDATTVTCLKMPNLVPAGSLSHTVDHFTKIHIGERAIVWEFKPKWLSGNDKYCRNCTLNLLRGQTSISYCHAQLLNPGQAGPILKSLFAGLNVPPAFIEDMEAYIAQPCSVLQRLRVAQEQVDASLGPLDQPDTAASPERCLSMTLKDVSCFVSWHKDASPVAVVVDLDMKPAAKSAHWTALQEQLDRFQPQVRH</sequence>
<accession>Q75EW5</accession>
<comment type="function">
    <text evidence="1">Has kinase activity and phosphorylates inositol-1,3,4,5,6-pentakisphosphate (Ins(1,3,4,5,6)P5) to produce 1,2,3,4,5,6-hexakisphosphate (InsP6), also known as phytate.</text>
</comment>
<comment type="catalytic activity">
    <reaction>
        <text>1D-myo-inositol 1,3,4,5,6-pentakisphosphate + ATP = 1D-myo-inositol hexakisphosphate + ADP + H(+)</text>
        <dbReference type="Rhea" id="RHEA:20313"/>
        <dbReference type="ChEBI" id="CHEBI:15378"/>
        <dbReference type="ChEBI" id="CHEBI:30616"/>
        <dbReference type="ChEBI" id="CHEBI:57733"/>
        <dbReference type="ChEBI" id="CHEBI:58130"/>
        <dbReference type="ChEBI" id="CHEBI:456216"/>
        <dbReference type="EC" id="2.7.1.158"/>
    </reaction>
</comment>
<comment type="subcellular location">
    <subcellularLocation>
        <location evidence="1">Nucleus</location>
    </subcellularLocation>
</comment>
<comment type="domain">
    <text>The EXKPK motif is conserved in inositol-pentakisphosphate 2-kinases of both family 1 and 2.</text>
</comment>
<comment type="similarity">
    <text evidence="2">Belongs to the IPK1 type 1 family.</text>
</comment>
<gene>
    <name type="primary">IPK1</name>
    <name type="ordered locus">AAL037C</name>
</gene>
<reference key="1">
    <citation type="journal article" date="2004" name="Science">
        <title>The Ashbya gossypii genome as a tool for mapping the ancient Saccharomyces cerevisiae genome.</title>
        <authorList>
            <person name="Dietrich F.S."/>
            <person name="Voegeli S."/>
            <person name="Brachat S."/>
            <person name="Lerch A."/>
            <person name="Gates K."/>
            <person name="Steiner S."/>
            <person name="Mohr C."/>
            <person name="Poehlmann R."/>
            <person name="Luedi P."/>
            <person name="Choi S."/>
            <person name="Wing R.A."/>
            <person name="Flavier A."/>
            <person name="Gaffney T.D."/>
            <person name="Philippsen P."/>
        </authorList>
    </citation>
    <scope>NUCLEOTIDE SEQUENCE [LARGE SCALE GENOMIC DNA]</scope>
    <source>
        <strain>ATCC 10895 / CBS 109.51 / FGSC 9923 / NRRL Y-1056</strain>
    </source>
</reference>
<reference key="2">
    <citation type="journal article" date="2013" name="G3 (Bethesda)">
        <title>Genomes of Ashbya fungi isolated from insects reveal four mating-type loci, numerous translocations, lack of transposons, and distinct gene duplications.</title>
        <authorList>
            <person name="Dietrich F.S."/>
            <person name="Voegeli S."/>
            <person name="Kuo S."/>
            <person name="Philippsen P."/>
        </authorList>
    </citation>
    <scope>GENOME REANNOTATION</scope>
    <source>
        <strain>ATCC 10895 / CBS 109.51 / FGSC 9923 / NRRL Y-1056</strain>
    </source>
</reference>
<organism>
    <name type="scientific">Eremothecium gossypii (strain ATCC 10895 / CBS 109.51 / FGSC 9923 / NRRL Y-1056)</name>
    <name type="common">Yeast</name>
    <name type="synonym">Ashbya gossypii</name>
    <dbReference type="NCBI Taxonomy" id="284811"/>
    <lineage>
        <taxon>Eukaryota</taxon>
        <taxon>Fungi</taxon>
        <taxon>Dikarya</taxon>
        <taxon>Ascomycota</taxon>
        <taxon>Saccharomycotina</taxon>
        <taxon>Saccharomycetes</taxon>
        <taxon>Saccharomycetales</taxon>
        <taxon>Saccharomycetaceae</taxon>
        <taxon>Eremothecium</taxon>
    </lineage>
</organism>
<keyword id="KW-0067">ATP-binding</keyword>
<keyword id="KW-0418">Kinase</keyword>
<keyword id="KW-0547">Nucleotide-binding</keyword>
<keyword id="KW-0539">Nucleus</keyword>
<keyword id="KW-1185">Reference proteome</keyword>
<keyword id="KW-0808">Transferase</keyword>
<feature type="chain" id="PRO_0000110521" description="Inositol-pentakisphosphate 2-kinase">
    <location>
        <begin position="1"/>
        <end position="278"/>
    </location>
</feature>
<feature type="short sequence motif" description="EXKPK motif">
    <location>
        <begin position="123"/>
        <end position="127"/>
    </location>
</feature>